<evidence type="ECO:0000255" key="1">
    <source>
        <dbReference type="HAMAP-Rule" id="MF_00766"/>
    </source>
</evidence>
<feature type="chain" id="PRO_1000133616" description="Biosynthetic peptidoglycan transglycosylase">
    <location>
        <begin position="1"/>
        <end position="241"/>
    </location>
</feature>
<feature type="transmembrane region" description="Helical" evidence="1">
    <location>
        <begin position="18"/>
        <end position="38"/>
    </location>
</feature>
<sequence length="241" mass="27096">MISVRRGFSQLWYWGKRGVIGIIALWMAGILIFAFLPVPFSMVMIERQLGAWLTGDFAYVAHSDWVPMDEISPYMALAVMAAEDQKFPDHWGFDVGAIESALSHNQRNQKRIRGASTLSQQTAKNVFLWDGRSWVRKGLEVGLTAGIELIWTKRRILTVYLNIAEFGNGIFGVEAAARHFFNKPASKLSASEAALLAAVLPNPLRFKVNAPSGYVISRQQWILRQMHQLGGKTFLQENTLD</sequence>
<organism>
    <name type="scientific">Yersinia pestis bv. Antiqua (strain Angola)</name>
    <dbReference type="NCBI Taxonomy" id="349746"/>
    <lineage>
        <taxon>Bacteria</taxon>
        <taxon>Pseudomonadati</taxon>
        <taxon>Pseudomonadota</taxon>
        <taxon>Gammaproteobacteria</taxon>
        <taxon>Enterobacterales</taxon>
        <taxon>Yersiniaceae</taxon>
        <taxon>Yersinia</taxon>
    </lineage>
</organism>
<comment type="function">
    <text evidence="1">Peptidoglycan polymerase that catalyzes glycan chain elongation from lipid-linked precursors.</text>
</comment>
<comment type="catalytic activity">
    <reaction evidence="1">
        <text>[GlcNAc-(1-&gt;4)-Mur2Ac(oyl-L-Ala-gamma-D-Glu-L-Lys-D-Ala-D-Ala)](n)-di-trans,octa-cis-undecaprenyl diphosphate + beta-D-GlcNAc-(1-&gt;4)-Mur2Ac(oyl-L-Ala-gamma-D-Glu-L-Lys-D-Ala-D-Ala)-di-trans,octa-cis-undecaprenyl diphosphate = [GlcNAc-(1-&gt;4)-Mur2Ac(oyl-L-Ala-gamma-D-Glu-L-Lys-D-Ala-D-Ala)](n+1)-di-trans,octa-cis-undecaprenyl diphosphate + di-trans,octa-cis-undecaprenyl diphosphate + H(+)</text>
        <dbReference type="Rhea" id="RHEA:23708"/>
        <dbReference type="Rhea" id="RHEA-COMP:9602"/>
        <dbReference type="Rhea" id="RHEA-COMP:9603"/>
        <dbReference type="ChEBI" id="CHEBI:15378"/>
        <dbReference type="ChEBI" id="CHEBI:58405"/>
        <dbReference type="ChEBI" id="CHEBI:60033"/>
        <dbReference type="ChEBI" id="CHEBI:78435"/>
        <dbReference type="EC" id="2.4.99.28"/>
    </reaction>
</comment>
<comment type="pathway">
    <text evidence="1">Cell wall biogenesis; peptidoglycan biosynthesis.</text>
</comment>
<comment type="subcellular location">
    <subcellularLocation>
        <location evidence="1">Cell inner membrane</location>
        <topology evidence="1">Single-pass membrane protein</topology>
    </subcellularLocation>
</comment>
<comment type="similarity">
    <text evidence="1">Belongs to the glycosyltransferase 51 family.</text>
</comment>
<name>MTGA_YERPG</name>
<gene>
    <name evidence="1" type="primary">mtgA</name>
    <name type="ordered locus">YpAngola_A1124</name>
</gene>
<keyword id="KW-0997">Cell inner membrane</keyword>
<keyword id="KW-1003">Cell membrane</keyword>
<keyword id="KW-0133">Cell shape</keyword>
<keyword id="KW-0961">Cell wall biogenesis/degradation</keyword>
<keyword id="KW-0328">Glycosyltransferase</keyword>
<keyword id="KW-0472">Membrane</keyword>
<keyword id="KW-0573">Peptidoglycan synthesis</keyword>
<keyword id="KW-0808">Transferase</keyword>
<keyword id="KW-0812">Transmembrane</keyword>
<keyword id="KW-1133">Transmembrane helix</keyword>
<proteinExistence type="inferred from homology"/>
<accession>A9R1R0</accession>
<protein>
    <recommendedName>
        <fullName evidence="1">Biosynthetic peptidoglycan transglycosylase</fullName>
        <ecNumber evidence="1">2.4.99.28</ecNumber>
    </recommendedName>
    <alternativeName>
        <fullName evidence="1">Glycan polymerase</fullName>
    </alternativeName>
    <alternativeName>
        <fullName evidence="1">Peptidoglycan glycosyltransferase MtgA</fullName>
        <shortName evidence="1">PGT</shortName>
    </alternativeName>
</protein>
<dbReference type="EC" id="2.4.99.28" evidence="1"/>
<dbReference type="EMBL" id="CP000901">
    <property type="protein sequence ID" value="ABX86734.1"/>
    <property type="molecule type" value="Genomic_DNA"/>
</dbReference>
<dbReference type="RefSeq" id="WP_002210144.1">
    <property type="nucleotide sequence ID" value="NZ_CP009935.1"/>
</dbReference>
<dbReference type="SMR" id="A9R1R0"/>
<dbReference type="CAZy" id="GT51">
    <property type="family name" value="Glycosyltransferase Family 51"/>
</dbReference>
<dbReference type="GeneID" id="57975163"/>
<dbReference type="KEGG" id="ypg:YpAngola_A1124"/>
<dbReference type="PATRIC" id="fig|349746.12.peg.2075"/>
<dbReference type="UniPathway" id="UPA00219"/>
<dbReference type="GO" id="GO:0009274">
    <property type="term" value="C:peptidoglycan-based cell wall"/>
    <property type="evidence" value="ECO:0007669"/>
    <property type="project" value="InterPro"/>
</dbReference>
<dbReference type="GO" id="GO:0005886">
    <property type="term" value="C:plasma membrane"/>
    <property type="evidence" value="ECO:0007669"/>
    <property type="project" value="UniProtKB-SubCell"/>
</dbReference>
<dbReference type="GO" id="GO:0016763">
    <property type="term" value="F:pentosyltransferase activity"/>
    <property type="evidence" value="ECO:0007669"/>
    <property type="project" value="InterPro"/>
</dbReference>
<dbReference type="GO" id="GO:0008955">
    <property type="term" value="F:peptidoglycan glycosyltransferase activity"/>
    <property type="evidence" value="ECO:0007669"/>
    <property type="project" value="UniProtKB-UniRule"/>
</dbReference>
<dbReference type="GO" id="GO:0071555">
    <property type="term" value="P:cell wall organization"/>
    <property type="evidence" value="ECO:0007669"/>
    <property type="project" value="UniProtKB-KW"/>
</dbReference>
<dbReference type="GO" id="GO:0009252">
    <property type="term" value="P:peptidoglycan biosynthetic process"/>
    <property type="evidence" value="ECO:0007669"/>
    <property type="project" value="UniProtKB-UniRule"/>
</dbReference>
<dbReference type="GO" id="GO:0008360">
    <property type="term" value="P:regulation of cell shape"/>
    <property type="evidence" value="ECO:0007669"/>
    <property type="project" value="UniProtKB-KW"/>
</dbReference>
<dbReference type="Gene3D" id="1.10.3810.10">
    <property type="entry name" value="Biosynthetic peptidoglycan transglycosylase-like"/>
    <property type="match status" value="1"/>
</dbReference>
<dbReference type="HAMAP" id="MF_00766">
    <property type="entry name" value="PGT_MtgA"/>
    <property type="match status" value="1"/>
</dbReference>
<dbReference type="InterPro" id="IPR001264">
    <property type="entry name" value="Glyco_trans_51"/>
</dbReference>
<dbReference type="InterPro" id="IPR023346">
    <property type="entry name" value="Lysozyme-like_dom_sf"/>
</dbReference>
<dbReference type="InterPro" id="IPR036950">
    <property type="entry name" value="PBP_transglycosylase"/>
</dbReference>
<dbReference type="InterPro" id="IPR011812">
    <property type="entry name" value="Pep_trsgly"/>
</dbReference>
<dbReference type="NCBIfam" id="TIGR02070">
    <property type="entry name" value="mono_pep_trsgly"/>
    <property type="match status" value="1"/>
</dbReference>
<dbReference type="PANTHER" id="PTHR30400:SF0">
    <property type="entry name" value="BIOSYNTHETIC PEPTIDOGLYCAN TRANSGLYCOSYLASE"/>
    <property type="match status" value="1"/>
</dbReference>
<dbReference type="PANTHER" id="PTHR30400">
    <property type="entry name" value="MONOFUNCTIONAL BIOSYNTHETIC PEPTIDOGLYCAN TRANSGLYCOSYLASE"/>
    <property type="match status" value="1"/>
</dbReference>
<dbReference type="Pfam" id="PF00912">
    <property type="entry name" value="Transgly"/>
    <property type="match status" value="1"/>
</dbReference>
<dbReference type="SUPFAM" id="SSF53955">
    <property type="entry name" value="Lysozyme-like"/>
    <property type="match status" value="1"/>
</dbReference>
<reference key="1">
    <citation type="journal article" date="2010" name="J. Bacteriol.">
        <title>Genome sequence of the deep-rooted Yersinia pestis strain Angola reveals new insights into the evolution and pangenome of the plague bacterium.</title>
        <authorList>
            <person name="Eppinger M."/>
            <person name="Worsham P.L."/>
            <person name="Nikolich M.P."/>
            <person name="Riley D.R."/>
            <person name="Sebastian Y."/>
            <person name="Mou S."/>
            <person name="Achtman M."/>
            <person name="Lindler L.E."/>
            <person name="Ravel J."/>
        </authorList>
    </citation>
    <scope>NUCLEOTIDE SEQUENCE [LARGE SCALE GENOMIC DNA]</scope>
    <source>
        <strain>Angola</strain>
    </source>
</reference>